<dbReference type="EC" id="2.3.3.16"/>
<dbReference type="EMBL" id="LT708304">
    <property type="protein sequence ID" value="SIT99511.1"/>
    <property type="molecule type" value="Genomic_DNA"/>
</dbReference>
<dbReference type="RefSeq" id="NP_854570.1">
    <property type="nucleotide sequence ID" value="NC_002945.3"/>
</dbReference>
<dbReference type="RefSeq" id="WP_003898633.1">
    <property type="nucleotide sequence ID" value="NC_002945.4"/>
</dbReference>
<dbReference type="PDB" id="6WGY">
    <property type="method" value="X-ray"/>
    <property type="resolution" value="2.30 A"/>
    <property type="chains" value="A/B/C/D=1-373"/>
</dbReference>
<dbReference type="PDBsum" id="6WGY"/>
<dbReference type="SMR" id="P63778"/>
<dbReference type="KEGG" id="mbo:BQ2027_MB0913C"/>
<dbReference type="PATRIC" id="fig|233413.5.peg.994"/>
<dbReference type="UniPathway" id="UPA00223">
    <property type="reaction ID" value="UER00717"/>
</dbReference>
<dbReference type="Proteomes" id="UP000001419">
    <property type="component" value="Chromosome"/>
</dbReference>
<dbReference type="GO" id="GO:0005829">
    <property type="term" value="C:cytosol"/>
    <property type="evidence" value="ECO:0007669"/>
    <property type="project" value="TreeGrafter"/>
</dbReference>
<dbReference type="GO" id="GO:0004108">
    <property type="term" value="F:citrate (Si)-synthase activity"/>
    <property type="evidence" value="ECO:0007669"/>
    <property type="project" value="TreeGrafter"/>
</dbReference>
<dbReference type="GO" id="GO:0005975">
    <property type="term" value="P:carbohydrate metabolic process"/>
    <property type="evidence" value="ECO:0007669"/>
    <property type="project" value="TreeGrafter"/>
</dbReference>
<dbReference type="GO" id="GO:0006099">
    <property type="term" value="P:tricarboxylic acid cycle"/>
    <property type="evidence" value="ECO:0007669"/>
    <property type="project" value="UniProtKB-UniPathway"/>
</dbReference>
<dbReference type="CDD" id="cd06109">
    <property type="entry name" value="BsCS-I_like"/>
    <property type="match status" value="1"/>
</dbReference>
<dbReference type="FunFam" id="1.10.230.10:FF:000006">
    <property type="entry name" value="Citrate synthase 2"/>
    <property type="match status" value="1"/>
</dbReference>
<dbReference type="FunFam" id="1.10.580.10:FF:000007">
    <property type="entry name" value="Citrate synthase 2"/>
    <property type="match status" value="1"/>
</dbReference>
<dbReference type="Gene3D" id="1.10.580.10">
    <property type="entry name" value="Citrate Synthase, domain 1"/>
    <property type="match status" value="2"/>
</dbReference>
<dbReference type="Gene3D" id="1.10.230.10">
    <property type="entry name" value="Cytochrome P450-Terp, domain 2"/>
    <property type="match status" value="1"/>
</dbReference>
<dbReference type="InterPro" id="IPR016142">
    <property type="entry name" value="Citrate_synth-like_lrg_a-sub"/>
</dbReference>
<dbReference type="InterPro" id="IPR016143">
    <property type="entry name" value="Citrate_synth-like_sm_a-sub"/>
</dbReference>
<dbReference type="InterPro" id="IPR002020">
    <property type="entry name" value="Citrate_synthase"/>
</dbReference>
<dbReference type="InterPro" id="IPR019810">
    <property type="entry name" value="Citrate_synthase_AS"/>
</dbReference>
<dbReference type="InterPro" id="IPR036969">
    <property type="entry name" value="Citrate_synthase_sf"/>
</dbReference>
<dbReference type="NCBIfam" id="NF009005">
    <property type="entry name" value="PRK12350.1"/>
    <property type="match status" value="1"/>
</dbReference>
<dbReference type="PANTHER" id="PTHR11739">
    <property type="entry name" value="CITRATE SYNTHASE"/>
    <property type="match status" value="1"/>
</dbReference>
<dbReference type="PANTHER" id="PTHR11739:SF23">
    <property type="entry name" value="CITRATE SYNTHASE 2-RELATED"/>
    <property type="match status" value="1"/>
</dbReference>
<dbReference type="Pfam" id="PF00285">
    <property type="entry name" value="Citrate_synt"/>
    <property type="match status" value="2"/>
</dbReference>
<dbReference type="PRINTS" id="PR00143">
    <property type="entry name" value="CITRTSNTHASE"/>
</dbReference>
<dbReference type="SUPFAM" id="SSF48256">
    <property type="entry name" value="Citrate synthase"/>
    <property type="match status" value="1"/>
</dbReference>
<dbReference type="PROSITE" id="PS00480">
    <property type="entry name" value="CITRATE_SYNTHASE"/>
    <property type="match status" value="1"/>
</dbReference>
<feature type="chain" id="PRO_0000169950" description="Putative citrate synthase 2">
    <location>
        <begin position="1"/>
        <end position="373"/>
    </location>
</feature>
<feature type="active site" evidence="2">
    <location>
        <position position="250"/>
    </location>
</feature>
<feature type="active site" evidence="2">
    <location>
        <position position="303"/>
    </location>
</feature>
<feature type="strand" evidence="4">
    <location>
        <begin position="16"/>
        <end position="26"/>
    </location>
</feature>
<feature type="turn" evidence="4">
    <location>
        <begin position="27"/>
        <end position="30"/>
    </location>
</feature>
<feature type="strand" evidence="4">
    <location>
        <begin position="31"/>
        <end position="34"/>
    </location>
</feature>
<feature type="helix" evidence="4">
    <location>
        <begin position="39"/>
        <end position="44"/>
    </location>
</feature>
<feature type="helix" evidence="4">
    <location>
        <begin position="49"/>
        <end position="58"/>
    </location>
</feature>
<feature type="strand" evidence="4">
    <location>
        <begin position="59"/>
        <end position="62"/>
    </location>
</feature>
<feature type="helix" evidence="4">
    <location>
        <begin position="80"/>
        <end position="89"/>
    </location>
</feature>
<feature type="helix" evidence="4">
    <location>
        <begin position="91"/>
        <end position="95"/>
    </location>
</feature>
<feature type="helix" evidence="4">
    <location>
        <begin position="100"/>
        <end position="102"/>
    </location>
</feature>
<feature type="helix" evidence="4">
    <location>
        <begin position="105"/>
        <end position="128"/>
    </location>
</feature>
<feature type="helix" evidence="4">
    <location>
        <begin position="137"/>
        <end position="140"/>
    </location>
</feature>
<feature type="helix" evidence="4">
    <location>
        <begin position="146"/>
        <end position="155"/>
    </location>
</feature>
<feature type="helix" evidence="4">
    <location>
        <begin position="160"/>
        <end position="173"/>
    </location>
</feature>
<feature type="helix" evidence="4">
    <location>
        <begin position="180"/>
        <end position="190"/>
    </location>
</feature>
<feature type="helix" evidence="4">
    <location>
        <begin position="195"/>
        <end position="206"/>
    </location>
</feature>
<feature type="helix" evidence="4">
    <location>
        <begin position="219"/>
        <end position="228"/>
    </location>
</feature>
<feature type="helix" evidence="4">
    <location>
        <begin position="231"/>
        <end position="240"/>
    </location>
</feature>
<feature type="strand" evidence="4">
    <location>
        <begin position="248"/>
        <end position="250"/>
    </location>
</feature>
<feature type="strand" evidence="4">
    <location>
        <begin position="252"/>
        <end position="256"/>
    </location>
</feature>
<feature type="helix" evidence="4">
    <location>
        <begin position="258"/>
        <end position="269"/>
    </location>
</feature>
<feature type="helix" evidence="4">
    <location>
        <begin position="275"/>
        <end position="292"/>
    </location>
</feature>
<feature type="strand" evidence="4">
    <location>
        <begin position="298"/>
        <end position="300"/>
    </location>
</feature>
<feature type="helix" evidence="4">
    <location>
        <begin position="302"/>
        <end position="312"/>
    </location>
</feature>
<feature type="helix" evidence="4">
    <location>
        <begin position="317"/>
        <end position="319"/>
    </location>
</feature>
<feature type="helix" evidence="4">
    <location>
        <begin position="320"/>
        <end position="342"/>
    </location>
</feature>
<feature type="strand" evidence="4">
    <location>
        <begin position="349"/>
        <end position="352"/>
    </location>
</feature>
<feature type="helix" evidence="4">
    <location>
        <begin position="360"/>
        <end position="362"/>
    </location>
</feature>
<feature type="helix" evidence="4">
    <location>
        <begin position="366"/>
        <end position="373"/>
    </location>
</feature>
<protein>
    <recommendedName>
        <fullName>Putative citrate synthase 2</fullName>
        <ecNumber>2.3.3.16</ecNumber>
    </recommendedName>
</protein>
<sequence>MTVVPENFVPGLDGVVAFTTEIAEPDKDGGALRYRGVDIEDLVSQRVTFGDVWALLVDGNFGSGLPPAEPFPLPIHSGDVRVDVQAGLAMLAPIWGYAPLLDIDDATARQQLARASVMALSYVAQSARGIYQPAVPQRIIDECSTVTARFMTRWQGEPDPRHIEAIDAYWVSAAEHGMNASTFTARVIASTGADVAAALSGAIGAMSGPLHGGAPARVLPMLDEVERAGDARSVVKGILDRGEKLMGFGHRVYRAEDPRARVLRAAAERLGAPRYEVAVAVEQAALSELRERRPDRAIETNVEFWAAVVLDFARVPANMMPAMFTCGRTAGWCAHILEQKRLGKLVRPSAIYVGPGPRSPESVDGWERVLTTA</sequence>
<accession>P63778</accession>
<accession>A0A1R3XWQ6</accession>
<accession>Q10529</accession>
<accession>X2BG39</accession>
<comment type="catalytic activity">
    <reaction evidence="2">
        <text>oxaloacetate + acetyl-CoA + H2O = citrate + CoA + H(+)</text>
        <dbReference type="Rhea" id="RHEA:16845"/>
        <dbReference type="ChEBI" id="CHEBI:15377"/>
        <dbReference type="ChEBI" id="CHEBI:15378"/>
        <dbReference type="ChEBI" id="CHEBI:16452"/>
        <dbReference type="ChEBI" id="CHEBI:16947"/>
        <dbReference type="ChEBI" id="CHEBI:57287"/>
        <dbReference type="ChEBI" id="CHEBI:57288"/>
        <dbReference type="EC" id="2.3.3.16"/>
    </reaction>
</comment>
<comment type="pathway">
    <text>Carbohydrate metabolism; tricarboxylic acid cycle; isocitrate from oxaloacetate: step 1/2.</text>
</comment>
<comment type="miscellaneous">
    <text evidence="1">Citrate synthase is found in nearly all cells capable of oxidative metabolism.</text>
</comment>
<comment type="similarity">
    <text evidence="3">Belongs to the citrate synthase family.</text>
</comment>
<keyword id="KW-0002">3D-structure</keyword>
<keyword id="KW-0021">Allosteric enzyme</keyword>
<keyword id="KW-1185">Reference proteome</keyword>
<keyword id="KW-0808">Transferase</keyword>
<keyword id="KW-0816">Tricarboxylic acid cycle</keyword>
<name>CISY2_MYCBO</name>
<evidence type="ECO:0000250" key="1"/>
<evidence type="ECO:0000255" key="2">
    <source>
        <dbReference type="PROSITE-ProRule" id="PRU10117"/>
    </source>
</evidence>
<evidence type="ECO:0000305" key="3"/>
<evidence type="ECO:0007829" key="4">
    <source>
        <dbReference type="PDB" id="6WGY"/>
    </source>
</evidence>
<gene>
    <name type="primary">citA</name>
    <name type="ordered locus">BQ2027_MB0913C</name>
</gene>
<reference key="1">
    <citation type="journal article" date="2003" name="Proc. Natl. Acad. Sci. U.S.A.">
        <title>The complete genome sequence of Mycobacterium bovis.</title>
        <authorList>
            <person name="Garnier T."/>
            <person name="Eiglmeier K."/>
            <person name="Camus J.-C."/>
            <person name="Medina N."/>
            <person name="Mansoor H."/>
            <person name="Pryor M."/>
            <person name="Duthoy S."/>
            <person name="Grondin S."/>
            <person name="Lacroix C."/>
            <person name="Monsempe C."/>
            <person name="Simon S."/>
            <person name="Harris B."/>
            <person name="Atkin R."/>
            <person name="Doggett J."/>
            <person name="Mayes R."/>
            <person name="Keating L."/>
            <person name="Wheeler P.R."/>
            <person name="Parkhill J."/>
            <person name="Barrell B.G."/>
            <person name="Cole S.T."/>
            <person name="Gordon S.V."/>
            <person name="Hewinson R.G."/>
        </authorList>
    </citation>
    <scope>NUCLEOTIDE SEQUENCE [LARGE SCALE GENOMIC DNA]</scope>
    <source>
        <strain>ATCC BAA-935 / AF2122/97</strain>
    </source>
</reference>
<reference key="2">
    <citation type="journal article" date="2017" name="Genome Announc.">
        <title>Updated reference genome sequence and annotation of Mycobacterium bovis AF2122/97.</title>
        <authorList>
            <person name="Malone K.M."/>
            <person name="Farrell D."/>
            <person name="Stuber T.P."/>
            <person name="Schubert O.T."/>
            <person name="Aebersold R."/>
            <person name="Robbe-Austerman S."/>
            <person name="Gordon S.V."/>
        </authorList>
    </citation>
    <scope>NUCLEOTIDE SEQUENCE [LARGE SCALE GENOMIC DNA]</scope>
    <scope>GENOME REANNOTATION</scope>
    <source>
        <strain>ATCC BAA-935 / AF2122/97</strain>
    </source>
</reference>
<proteinExistence type="evidence at protein level"/>
<organism>
    <name type="scientific">Mycobacterium bovis (strain ATCC BAA-935 / AF2122/97)</name>
    <dbReference type="NCBI Taxonomy" id="233413"/>
    <lineage>
        <taxon>Bacteria</taxon>
        <taxon>Bacillati</taxon>
        <taxon>Actinomycetota</taxon>
        <taxon>Actinomycetes</taxon>
        <taxon>Mycobacteriales</taxon>
        <taxon>Mycobacteriaceae</taxon>
        <taxon>Mycobacterium</taxon>
        <taxon>Mycobacterium tuberculosis complex</taxon>
    </lineage>
</organism>